<dbReference type="EC" id="2.8.4.3" evidence="1"/>
<dbReference type="EMBL" id="CP000524">
    <property type="protein sequence ID" value="ABM44770.1"/>
    <property type="molecule type" value="Genomic_DNA"/>
</dbReference>
<dbReference type="RefSeq" id="WP_005767957.1">
    <property type="nucleotide sequence ID" value="NC_008783.1"/>
</dbReference>
<dbReference type="SMR" id="A1UU39"/>
<dbReference type="STRING" id="360095.BARBAKC583_1243"/>
<dbReference type="GeneID" id="4684980"/>
<dbReference type="KEGG" id="bbk:BARBAKC583_1243"/>
<dbReference type="PATRIC" id="fig|360095.6.peg.1219"/>
<dbReference type="eggNOG" id="COG0621">
    <property type="taxonomic scope" value="Bacteria"/>
</dbReference>
<dbReference type="HOGENOM" id="CLU_018697_2_0_5"/>
<dbReference type="OrthoDB" id="9805215at2"/>
<dbReference type="Proteomes" id="UP000000643">
    <property type="component" value="Chromosome"/>
</dbReference>
<dbReference type="GO" id="GO:0005829">
    <property type="term" value="C:cytosol"/>
    <property type="evidence" value="ECO:0007669"/>
    <property type="project" value="TreeGrafter"/>
</dbReference>
<dbReference type="GO" id="GO:0051539">
    <property type="term" value="F:4 iron, 4 sulfur cluster binding"/>
    <property type="evidence" value="ECO:0007669"/>
    <property type="project" value="UniProtKB-UniRule"/>
</dbReference>
<dbReference type="GO" id="GO:0046872">
    <property type="term" value="F:metal ion binding"/>
    <property type="evidence" value="ECO:0007669"/>
    <property type="project" value="UniProtKB-KW"/>
</dbReference>
<dbReference type="GO" id="GO:0035597">
    <property type="term" value="F:N6-isopentenyladenosine methylthiotransferase activity"/>
    <property type="evidence" value="ECO:0007669"/>
    <property type="project" value="TreeGrafter"/>
</dbReference>
<dbReference type="CDD" id="cd01335">
    <property type="entry name" value="Radical_SAM"/>
    <property type="match status" value="1"/>
</dbReference>
<dbReference type="FunFam" id="3.40.50.12160:FF:000003">
    <property type="entry name" value="CDK5 regulatory subunit-associated protein 1"/>
    <property type="match status" value="1"/>
</dbReference>
<dbReference type="FunFam" id="3.80.30.20:FF:000001">
    <property type="entry name" value="tRNA-2-methylthio-N(6)-dimethylallyladenosine synthase 2"/>
    <property type="match status" value="1"/>
</dbReference>
<dbReference type="Gene3D" id="3.40.50.12160">
    <property type="entry name" value="Methylthiotransferase, N-terminal domain"/>
    <property type="match status" value="1"/>
</dbReference>
<dbReference type="Gene3D" id="3.80.30.20">
    <property type="entry name" value="tm_1862 like domain"/>
    <property type="match status" value="1"/>
</dbReference>
<dbReference type="HAMAP" id="MF_01864">
    <property type="entry name" value="tRNA_metthiotr_MiaB"/>
    <property type="match status" value="1"/>
</dbReference>
<dbReference type="InterPro" id="IPR006638">
    <property type="entry name" value="Elp3/MiaA/NifB-like_rSAM"/>
</dbReference>
<dbReference type="InterPro" id="IPR005839">
    <property type="entry name" value="Methylthiotransferase"/>
</dbReference>
<dbReference type="InterPro" id="IPR020612">
    <property type="entry name" value="Methylthiotransferase_CS"/>
</dbReference>
<dbReference type="InterPro" id="IPR013848">
    <property type="entry name" value="Methylthiotransferase_N"/>
</dbReference>
<dbReference type="InterPro" id="IPR038135">
    <property type="entry name" value="Methylthiotransferase_N_sf"/>
</dbReference>
<dbReference type="InterPro" id="IPR006463">
    <property type="entry name" value="MiaB_methiolase"/>
</dbReference>
<dbReference type="InterPro" id="IPR007197">
    <property type="entry name" value="rSAM"/>
</dbReference>
<dbReference type="InterPro" id="IPR023404">
    <property type="entry name" value="rSAM_horseshoe"/>
</dbReference>
<dbReference type="InterPro" id="IPR002792">
    <property type="entry name" value="TRAM_dom"/>
</dbReference>
<dbReference type="NCBIfam" id="TIGR01574">
    <property type="entry name" value="miaB-methiolase"/>
    <property type="match status" value="1"/>
</dbReference>
<dbReference type="NCBIfam" id="TIGR00089">
    <property type="entry name" value="MiaB/RimO family radical SAM methylthiotransferase"/>
    <property type="match status" value="1"/>
</dbReference>
<dbReference type="PANTHER" id="PTHR43020">
    <property type="entry name" value="CDK5 REGULATORY SUBUNIT-ASSOCIATED PROTEIN 1"/>
    <property type="match status" value="1"/>
</dbReference>
<dbReference type="PANTHER" id="PTHR43020:SF2">
    <property type="entry name" value="MITOCHONDRIAL TRNA METHYLTHIOTRANSFERASE CDK5RAP1"/>
    <property type="match status" value="1"/>
</dbReference>
<dbReference type="Pfam" id="PF04055">
    <property type="entry name" value="Radical_SAM"/>
    <property type="match status" value="1"/>
</dbReference>
<dbReference type="Pfam" id="PF01938">
    <property type="entry name" value="TRAM"/>
    <property type="match status" value="1"/>
</dbReference>
<dbReference type="Pfam" id="PF00919">
    <property type="entry name" value="UPF0004"/>
    <property type="match status" value="1"/>
</dbReference>
<dbReference type="SFLD" id="SFLDF00273">
    <property type="entry name" value="(dimethylallyl)adenosine_tRNA"/>
    <property type="match status" value="1"/>
</dbReference>
<dbReference type="SFLD" id="SFLDG01082">
    <property type="entry name" value="B12-binding_domain_containing"/>
    <property type="match status" value="1"/>
</dbReference>
<dbReference type="SFLD" id="SFLDS00029">
    <property type="entry name" value="Radical_SAM"/>
    <property type="match status" value="1"/>
</dbReference>
<dbReference type="SMART" id="SM00729">
    <property type="entry name" value="Elp3"/>
    <property type="match status" value="1"/>
</dbReference>
<dbReference type="SUPFAM" id="SSF102114">
    <property type="entry name" value="Radical SAM enzymes"/>
    <property type="match status" value="1"/>
</dbReference>
<dbReference type="PROSITE" id="PS51449">
    <property type="entry name" value="MTTASE_N"/>
    <property type="match status" value="1"/>
</dbReference>
<dbReference type="PROSITE" id="PS01278">
    <property type="entry name" value="MTTASE_RADICAL"/>
    <property type="match status" value="1"/>
</dbReference>
<dbReference type="PROSITE" id="PS51918">
    <property type="entry name" value="RADICAL_SAM"/>
    <property type="match status" value="1"/>
</dbReference>
<dbReference type="PROSITE" id="PS50926">
    <property type="entry name" value="TRAM"/>
    <property type="match status" value="1"/>
</dbReference>
<accession>A1UU39</accession>
<proteinExistence type="inferred from homology"/>
<sequence length="458" mass="51537">MKQSNSKNTPPIASKKVFIKTYGCQMNVYDSQRMNDSLSAQGYVTTQTPNDADLILVNTCHIREKAAEKLYSDLGRLRMMRQKRTSEKPLMIGVTGCVAQAEGDEILRRSPTVDLVVGPQMYHRLPELLQQAQQGKKIVETNYAVEDKFNHLPPHNKRAVQKRGVSAFLTVQEGCDKFCTFCVVPYTRGAEISRSVEQITDEARQLIEADVKEITLLGQNVNGWHGQSTDGKTWRLGDLLYHLAKLDGLKRLRYTTSHPRDMDESLIAAHRNLDILMPYLHLPVQSGSDRILKAMNRQHKAIDYLNLIEKIRTARPDIAFSGDFIVGFPGETDDDFEETIKLIEQVGYSSAYSFKYSPRPGTLGATMKNQVDEKVKNDRLQRLQALLLDQQHRFLRSKIGQTTDVLIEKDGRHPGQIVGRSPWLLPVVVDTQAPIGTVMAIQITNASSNSFVGEKANS</sequence>
<protein>
    <recommendedName>
        <fullName evidence="1">tRNA-2-methylthio-N(6)-dimethylallyladenosine synthase</fullName>
        <ecNumber evidence="1">2.8.4.3</ecNumber>
    </recommendedName>
    <alternativeName>
        <fullName evidence="1">(Dimethylallyl)adenosine tRNA methylthiotransferase MiaB</fullName>
    </alternativeName>
    <alternativeName>
        <fullName evidence="1">tRNA-i(6)A37 methylthiotransferase</fullName>
    </alternativeName>
</protein>
<reference key="1">
    <citation type="submission" date="2006-12" db="EMBL/GenBank/DDBJ databases">
        <authorList>
            <person name="Hendrix L."/>
            <person name="Mohamoud Y."/>
            <person name="Radune D."/>
            <person name="Shvartsbeyn A."/>
            <person name="Daugherty S."/>
            <person name="Dodson R."/>
            <person name="Durkin A.S."/>
            <person name="Harkins D."/>
            <person name="Huot H."/>
            <person name="Kothari S.P."/>
            <person name="Madupu R."/>
            <person name="Li J."/>
            <person name="Nelson W.C."/>
            <person name="Shrivastava S."/>
            <person name="Giglio M.G."/>
            <person name="Haft D."/>
            <person name="Selengut J."/>
            <person name="Fraser-Ligget C."/>
            <person name="Seshadri R."/>
        </authorList>
    </citation>
    <scope>NUCLEOTIDE SEQUENCE [LARGE SCALE GENOMIC DNA]</scope>
    <source>
        <strain>ATCC 35685 / KC583 / Herrer 020/F12,63</strain>
    </source>
</reference>
<gene>
    <name evidence="1" type="primary">miaB</name>
    <name type="ordered locus">BARBAKC583_1243</name>
</gene>
<name>MIAB_BARBK</name>
<keyword id="KW-0004">4Fe-4S</keyword>
<keyword id="KW-0963">Cytoplasm</keyword>
<keyword id="KW-0408">Iron</keyword>
<keyword id="KW-0411">Iron-sulfur</keyword>
<keyword id="KW-0479">Metal-binding</keyword>
<keyword id="KW-0949">S-adenosyl-L-methionine</keyword>
<keyword id="KW-0808">Transferase</keyword>
<keyword id="KW-0819">tRNA processing</keyword>
<organism>
    <name type="scientific">Bartonella bacilliformis (strain ATCC 35685 / KC583 / Herrer 020/F12,63)</name>
    <dbReference type="NCBI Taxonomy" id="360095"/>
    <lineage>
        <taxon>Bacteria</taxon>
        <taxon>Pseudomonadati</taxon>
        <taxon>Pseudomonadota</taxon>
        <taxon>Alphaproteobacteria</taxon>
        <taxon>Hyphomicrobiales</taxon>
        <taxon>Bartonellaceae</taxon>
        <taxon>Bartonella</taxon>
    </lineage>
</organism>
<feature type="chain" id="PRO_0000374144" description="tRNA-2-methylthio-N(6)-dimethylallyladenosine synthase">
    <location>
        <begin position="1"/>
        <end position="458"/>
    </location>
</feature>
<feature type="domain" description="MTTase N-terminal" evidence="1">
    <location>
        <begin position="15"/>
        <end position="134"/>
    </location>
</feature>
<feature type="domain" description="Radical SAM core" evidence="2">
    <location>
        <begin position="161"/>
        <end position="393"/>
    </location>
</feature>
<feature type="domain" description="TRAM" evidence="1">
    <location>
        <begin position="396"/>
        <end position="457"/>
    </location>
</feature>
<feature type="binding site" evidence="1">
    <location>
        <position position="24"/>
    </location>
    <ligand>
        <name>[4Fe-4S] cluster</name>
        <dbReference type="ChEBI" id="CHEBI:49883"/>
        <label>1</label>
    </ligand>
</feature>
<feature type="binding site" evidence="1">
    <location>
        <position position="60"/>
    </location>
    <ligand>
        <name>[4Fe-4S] cluster</name>
        <dbReference type="ChEBI" id="CHEBI:49883"/>
        <label>1</label>
    </ligand>
</feature>
<feature type="binding site" evidence="1">
    <location>
        <position position="97"/>
    </location>
    <ligand>
        <name>[4Fe-4S] cluster</name>
        <dbReference type="ChEBI" id="CHEBI:49883"/>
        <label>1</label>
    </ligand>
</feature>
<feature type="binding site" evidence="1">
    <location>
        <position position="175"/>
    </location>
    <ligand>
        <name>[4Fe-4S] cluster</name>
        <dbReference type="ChEBI" id="CHEBI:49883"/>
        <label>2</label>
        <note>4Fe-4S-S-AdoMet</note>
    </ligand>
</feature>
<feature type="binding site" evidence="1">
    <location>
        <position position="179"/>
    </location>
    <ligand>
        <name>[4Fe-4S] cluster</name>
        <dbReference type="ChEBI" id="CHEBI:49883"/>
        <label>2</label>
        <note>4Fe-4S-S-AdoMet</note>
    </ligand>
</feature>
<feature type="binding site" evidence="1">
    <location>
        <position position="182"/>
    </location>
    <ligand>
        <name>[4Fe-4S] cluster</name>
        <dbReference type="ChEBI" id="CHEBI:49883"/>
        <label>2</label>
        <note>4Fe-4S-S-AdoMet</note>
    </ligand>
</feature>
<comment type="function">
    <text evidence="1">Catalyzes the methylthiolation of N6-(dimethylallyl)adenosine (i(6)A), leading to the formation of 2-methylthio-N6-(dimethylallyl)adenosine (ms(2)i(6)A) at position 37 in tRNAs that read codons beginning with uridine.</text>
</comment>
<comment type="catalytic activity">
    <reaction evidence="1">
        <text>N(6)-dimethylallyladenosine(37) in tRNA + (sulfur carrier)-SH + AH2 + 2 S-adenosyl-L-methionine = 2-methylsulfanyl-N(6)-dimethylallyladenosine(37) in tRNA + (sulfur carrier)-H + 5'-deoxyadenosine + L-methionine + A + S-adenosyl-L-homocysteine + 2 H(+)</text>
        <dbReference type="Rhea" id="RHEA:37067"/>
        <dbReference type="Rhea" id="RHEA-COMP:10375"/>
        <dbReference type="Rhea" id="RHEA-COMP:10376"/>
        <dbReference type="Rhea" id="RHEA-COMP:14737"/>
        <dbReference type="Rhea" id="RHEA-COMP:14739"/>
        <dbReference type="ChEBI" id="CHEBI:13193"/>
        <dbReference type="ChEBI" id="CHEBI:15378"/>
        <dbReference type="ChEBI" id="CHEBI:17319"/>
        <dbReference type="ChEBI" id="CHEBI:17499"/>
        <dbReference type="ChEBI" id="CHEBI:29917"/>
        <dbReference type="ChEBI" id="CHEBI:57844"/>
        <dbReference type="ChEBI" id="CHEBI:57856"/>
        <dbReference type="ChEBI" id="CHEBI:59789"/>
        <dbReference type="ChEBI" id="CHEBI:64428"/>
        <dbReference type="ChEBI" id="CHEBI:74415"/>
        <dbReference type="ChEBI" id="CHEBI:74417"/>
        <dbReference type="EC" id="2.8.4.3"/>
    </reaction>
</comment>
<comment type="cofactor">
    <cofactor evidence="1">
        <name>[4Fe-4S] cluster</name>
        <dbReference type="ChEBI" id="CHEBI:49883"/>
    </cofactor>
    <text evidence="1">Binds 2 [4Fe-4S] clusters. One cluster is coordinated with 3 cysteines and an exchangeable S-adenosyl-L-methionine.</text>
</comment>
<comment type="subunit">
    <text evidence="1">Monomer.</text>
</comment>
<comment type="subcellular location">
    <subcellularLocation>
        <location evidence="1">Cytoplasm</location>
    </subcellularLocation>
</comment>
<comment type="similarity">
    <text evidence="1">Belongs to the methylthiotransferase family. MiaB subfamily.</text>
</comment>
<evidence type="ECO:0000255" key="1">
    <source>
        <dbReference type="HAMAP-Rule" id="MF_01864"/>
    </source>
</evidence>
<evidence type="ECO:0000255" key="2">
    <source>
        <dbReference type="PROSITE-ProRule" id="PRU01266"/>
    </source>
</evidence>